<name>YT22_CAEEL</name>
<feature type="chain" id="PRO_0000065067" description="Uncharacterized protein B0304.2">
    <location>
        <begin position="1"/>
        <end position="218"/>
    </location>
</feature>
<feature type="region of interest" description="Disordered" evidence="1">
    <location>
        <begin position="1"/>
        <end position="39"/>
    </location>
</feature>
<feature type="region of interest" description="Disordered" evidence="1">
    <location>
        <begin position="63"/>
        <end position="116"/>
    </location>
</feature>
<feature type="region of interest" description="Disordered" evidence="1">
    <location>
        <begin position="170"/>
        <end position="205"/>
    </location>
</feature>
<feature type="compositionally biased region" description="Polar residues" evidence="1">
    <location>
        <begin position="1"/>
        <end position="21"/>
    </location>
</feature>
<feature type="compositionally biased region" description="Polar residues" evidence="1">
    <location>
        <begin position="68"/>
        <end position="102"/>
    </location>
</feature>
<feature type="compositionally biased region" description="Basic and acidic residues" evidence="1">
    <location>
        <begin position="183"/>
        <end position="195"/>
    </location>
</feature>
<reference key="1">
    <citation type="journal article" date="1998" name="Science">
        <title>Genome sequence of the nematode C. elegans: a platform for investigating biology.</title>
        <authorList>
            <consortium name="The C. elegans sequencing consortium"/>
        </authorList>
    </citation>
    <scope>NUCLEOTIDE SEQUENCE [LARGE SCALE GENOMIC DNA]</scope>
    <source>
        <strain>Bristol N2</strain>
    </source>
</reference>
<gene>
    <name type="ORF">B0304.2</name>
</gene>
<sequence length="218" mass="24230">MSSQQQESEASGYNTSASSEFGSLEDSHQFVSPVTRHASKRRAVENVDHLDELMKSSMVLSPEKRLRLNTSNDSNLVRNTARSPDSSMNGRPQTRRSTSSDIEISPRVRAMRSTSGSSMDLVRTVSSFCTDSISPKFFTNHGSTTRKRTENGSIYSRHRLGATFSPLVAGAKRKMATPSQSLKRQEKQSPLESRHGGLRSRGTPQRKLLLCDRLKVLN</sequence>
<organism>
    <name type="scientific">Caenorhabditis elegans</name>
    <dbReference type="NCBI Taxonomy" id="6239"/>
    <lineage>
        <taxon>Eukaryota</taxon>
        <taxon>Metazoa</taxon>
        <taxon>Ecdysozoa</taxon>
        <taxon>Nematoda</taxon>
        <taxon>Chromadorea</taxon>
        <taxon>Rhabditida</taxon>
        <taxon>Rhabditina</taxon>
        <taxon>Rhabditomorpha</taxon>
        <taxon>Rhabditoidea</taxon>
        <taxon>Rhabditidae</taxon>
        <taxon>Peloderinae</taxon>
        <taxon>Caenorhabditis</taxon>
    </lineage>
</organism>
<keyword id="KW-1185">Reference proteome</keyword>
<protein>
    <recommendedName>
        <fullName>Uncharacterized protein B0304.2</fullName>
    </recommendedName>
</protein>
<proteinExistence type="predicted"/>
<accession>Q10932</accession>
<dbReference type="EMBL" id="FO080166">
    <property type="protein sequence ID" value="CCD61734.1"/>
    <property type="molecule type" value="Genomic_DNA"/>
</dbReference>
<dbReference type="PIR" id="T15321">
    <property type="entry name" value="T15321"/>
</dbReference>
<dbReference type="RefSeq" id="NP_494800.1">
    <property type="nucleotide sequence ID" value="NM_062399.4"/>
</dbReference>
<dbReference type="FunCoup" id="Q10932">
    <property type="interactions" value="75"/>
</dbReference>
<dbReference type="STRING" id="6239.B0304.2.1"/>
<dbReference type="PaxDb" id="6239-B0304.2"/>
<dbReference type="EnsemblMetazoa" id="B0304.2.1">
    <property type="protein sequence ID" value="B0304.2.1"/>
    <property type="gene ID" value="WBGene00015134"/>
</dbReference>
<dbReference type="GeneID" id="173789"/>
<dbReference type="KEGG" id="cel:CELE_B0304.2"/>
<dbReference type="UCSC" id="B0304.2">
    <property type="organism name" value="c. elegans"/>
</dbReference>
<dbReference type="AGR" id="WB:WBGene00015134"/>
<dbReference type="CTD" id="173789"/>
<dbReference type="WormBase" id="B0304.2">
    <property type="protein sequence ID" value="CE02424"/>
    <property type="gene ID" value="WBGene00015134"/>
</dbReference>
<dbReference type="eggNOG" id="ENOG502TI7S">
    <property type="taxonomic scope" value="Eukaryota"/>
</dbReference>
<dbReference type="HOGENOM" id="CLU_1246373_0_0_1"/>
<dbReference type="InParanoid" id="Q10932"/>
<dbReference type="OMA" id="RLNTHND"/>
<dbReference type="OrthoDB" id="5819245at2759"/>
<dbReference type="PRO" id="PR:Q10932"/>
<dbReference type="Proteomes" id="UP000001940">
    <property type="component" value="Chromosome II"/>
</dbReference>
<dbReference type="Bgee" id="WBGene00015134">
    <property type="expression patterns" value="Expressed in germ line (C elegans) and 3 other cell types or tissues"/>
</dbReference>
<evidence type="ECO:0000256" key="1">
    <source>
        <dbReference type="SAM" id="MobiDB-lite"/>
    </source>
</evidence>